<evidence type="ECO:0000255" key="1"/>
<evidence type="ECO:0000256" key="2">
    <source>
        <dbReference type="SAM" id="MobiDB-lite"/>
    </source>
</evidence>
<evidence type="ECO:0000269" key="3">
    <source>
    </source>
</evidence>
<evidence type="ECO:0000269" key="4">
    <source>
    </source>
</evidence>
<evidence type="ECO:0000269" key="5">
    <source>
    </source>
</evidence>
<evidence type="ECO:0000269" key="6">
    <source>
    </source>
</evidence>
<evidence type="ECO:0000269" key="7">
    <source>
    </source>
</evidence>
<evidence type="ECO:0000303" key="8">
    <source>
    </source>
</evidence>
<evidence type="ECO:0000303" key="9">
    <source>
    </source>
</evidence>
<evidence type="ECO:0000303" key="10">
    <source>
    </source>
</evidence>
<evidence type="ECO:0000305" key="11"/>
<evidence type="ECO:0000305" key="12">
    <source>
    </source>
</evidence>
<evidence type="ECO:0000312" key="13">
    <source>
        <dbReference type="MGI" id="MGI:1891430"/>
    </source>
</evidence>
<dbReference type="EMBL" id="AF453744">
    <property type="protein sequence ID" value="AAM80481.1"/>
    <property type="molecule type" value="mRNA"/>
</dbReference>
<dbReference type="EMBL" id="AF512429">
    <property type="protein sequence ID" value="AAM44854.1"/>
    <property type="molecule type" value="mRNA"/>
</dbReference>
<dbReference type="EMBL" id="AK041041">
    <property type="protein sequence ID" value="BAC30795.1"/>
    <property type="molecule type" value="mRNA"/>
</dbReference>
<dbReference type="EMBL" id="AK079053">
    <property type="protein sequence ID" value="BAC37515.1"/>
    <property type="molecule type" value="mRNA"/>
</dbReference>
<dbReference type="EMBL" id="AK086373">
    <property type="protein sequence ID" value="BAC39656.1"/>
    <property type="molecule type" value="mRNA"/>
</dbReference>
<dbReference type="EMBL" id="AK156409">
    <property type="protein sequence ID" value="BAE33702.1"/>
    <property type="molecule type" value="mRNA"/>
</dbReference>
<dbReference type="EMBL" id="AK160394">
    <property type="protein sequence ID" value="BAE35764.1"/>
    <property type="molecule type" value="mRNA"/>
</dbReference>
<dbReference type="EMBL" id="AL713870">
    <property type="status" value="NOT_ANNOTATED_CDS"/>
    <property type="molecule type" value="Genomic_DNA"/>
</dbReference>
<dbReference type="EMBL" id="BC044800">
    <property type="protein sequence ID" value="AAH44800.1"/>
    <property type="molecule type" value="mRNA"/>
</dbReference>
<dbReference type="CCDS" id="CCDS24709.1">
    <molecule id="Q8BHK3-1"/>
</dbReference>
<dbReference type="RefSeq" id="NP_694810.2">
    <molecule id="Q8BHK3-1"/>
    <property type="nucleotide sequence ID" value="NM_153170.3"/>
</dbReference>
<dbReference type="SMR" id="Q8BHK3"/>
<dbReference type="FunCoup" id="Q8BHK3">
    <property type="interactions" value="598"/>
</dbReference>
<dbReference type="STRING" id="10090.ENSMUSP00000045613"/>
<dbReference type="TCDB" id="2.A.18.8.2">
    <property type="family name" value="the amino acid/auxin permease (aaap) family"/>
</dbReference>
<dbReference type="GlyGen" id="Q8BHK3">
    <property type="glycosylation" value="1 site, 1 N-linked glycan (1 site)"/>
</dbReference>
<dbReference type="iPTMnet" id="Q8BHK3"/>
<dbReference type="PhosphoSitePlus" id="Q8BHK3"/>
<dbReference type="PaxDb" id="10090-ENSMUSP00000045613"/>
<dbReference type="ProteomicsDB" id="256565">
    <molecule id="Q8BHK3-1"/>
</dbReference>
<dbReference type="ProteomicsDB" id="256566">
    <molecule id="Q8BHK3-2"/>
</dbReference>
<dbReference type="Antibodypedia" id="28201">
    <property type="antibodies" value="121 antibodies from 24 providers"/>
</dbReference>
<dbReference type="DNASU" id="246049"/>
<dbReference type="Ensembl" id="ENSMUST00000039305.6">
    <molecule id="Q8BHK3-1"/>
    <property type="protein sequence ID" value="ENSMUSP00000045613.6"/>
    <property type="gene ID" value="ENSMUSG00000020264.6"/>
</dbReference>
<dbReference type="GeneID" id="246049"/>
<dbReference type="KEGG" id="mmu:246049"/>
<dbReference type="UCSC" id="uc007iyz.2">
    <molecule id="Q8BHK3-1"/>
    <property type="organism name" value="mouse"/>
</dbReference>
<dbReference type="UCSC" id="uc007iza.1">
    <molecule id="Q8BHK3-2"/>
    <property type="organism name" value="mouse"/>
</dbReference>
<dbReference type="AGR" id="MGI:1891430"/>
<dbReference type="CTD" id="153201"/>
<dbReference type="MGI" id="MGI:1891430">
    <property type="gene designation" value="Slc36a2"/>
</dbReference>
<dbReference type="VEuPathDB" id="HostDB:ENSMUSG00000020264"/>
<dbReference type="eggNOG" id="KOG1304">
    <property type="taxonomic scope" value="Eukaryota"/>
</dbReference>
<dbReference type="GeneTree" id="ENSGT00940000162044"/>
<dbReference type="HOGENOM" id="CLU_009646_0_2_1"/>
<dbReference type="InParanoid" id="Q8BHK3"/>
<dbReference type="OMA" id="SAMYVPN"/>
<dbReference type="OrthoDB" id="1684102at2759"/>
<dbReference type="PhylomeDB" id="Q8BHK3"/>
<dbReference type="TreeFam" id="TF314873"/>
<dbReference type="Reactome" id="R-MMU-352230">
    <property type="pathway name" value="Amino acid transport across the plasma membrane"/>
</dbReference>
<dbReference type="Reactome" id="R-MMU-428559">
    <property type="pathway name" value="Proton-coupled neutral amino acid transporters"/>
</dbReference>
<dbReference type="SABIO-RK" id="Q8BHK3"/>
<dbReference type="BioGRID-ORCS" id="246049">
    <property type="hits" value="1 hit in 76 CRISPR screens"/>
</dbReference>
<dbReference type="PRO" id="PR:Q8BHK3"/>
<dbReference type="Proteomes" id="UP000000589">
    <property type="component" value="Chromosome 11"/>
</dbReference>
<dbReference type="RNAct" id="Q8BHK3">
    <property type="molecule type" value="protein"/>
</dbReference>
<dbReference type="Bgee" id="ENSMUSG00000020264">
    <property type="expression patterns" value="Expressed in brown adipose tissue and 111 other cell types or tissues"/>
</dbReference>
<dbReference type="GO" id="GO:0005789">
    <property type="term" value="C:endoplasmic reticulum membrane"/>
    <property type="evidence" value="ECO:0000314"/>
    <property type="project" value="UniProtKB"/>
</dbReference>
<dbReference type="GO" id="GO:0005886">
    <property type="term" value="C:plasma membrane"/>
    <property type="evidence" value="ECO:0000314"/>
    <property type="project" value="UniProtKB"/>
</dbReference>
<dbReference type="GO" id="GO:0055038">
    <property type="term" value="C:recycling endosome membrane"/>
    <property type="evidence" value="ECO:0000314"/>
    <property type="project" value="UniProtKB"/>
</dbReference>
<dbReference type="GO" id="GO:0005280">
    <property type="term" value="F:amino acid:proton symporter activity"/>
    <property type="evidence" value="ECO:0000314"/>
    <property type="project" value="UniProtKB"/>
</dbReference>
<dbReference type="GO" id="GO:0015187">
    <property type="term" value="F:glycine transmembrane transporter activity"/>
    <property type="evidence" value="ECO:0000314"/>
    <property type="project" value="MGI"/>
</dbReference>
<dbReference type="GO" id="GO:0015180">
    <property type="term" value="F:L-alanine transmembrane transporter activity"/>
    <property type="evidence" value="ECO:0000314"/>
    <property type="project" value="MGI"/>
</dbReference>
<dbReference type="GO" id="GO:0015193">
    <property type="term" value="F:L-proline transmembrane transporter activity"/>
    <property type="evidence" value="ECO:0000314"/>
    <property type="project" value="MGI"/>
</dbReference>
<dbReference type="GO" id="GO:0005297">
    <property type="term" value="F:proline:proton symporter activity"/>
    <property type="evidence" value="ECO:0000314"/>
    <property type="project" value="UniProtKB"/>
</dbReference>
<dbReference type="GO" id="GO:0015816">
    <property type="term" value="P:glycine transport"/>
    <property type="evidence" value="ECO:0000314"/>
    <property type="project" value="MGI"/>
</dbReference>
<dbReference type="GO" id="GO:0015808">
    <property type="term" value="P:L-alanine transport"/>
    <property type="evidence" value="ECO:0000314"/>
    <property type="project" value="MGI"/>
</dbReference>
<dbReference type="GO" id="GO:0015824">
    <property type="term" value="P:proline transport"/>
    <property type="evidence" value="ECO:0000314"/>
    <property type="project" value="MGI"/>
</dbReference>
<dbReference type="GO" id="GO:1902600">
    <property type="term" value="P:proton transmembrane transport"/>
    <property type="evidence" value="ECO:0000314"/>
    <property type="project" value="MGI"/>
</dbReference>
<dbReference type="InterPro" id="IPR013057">
    <property type="entry name" value="AA_transpt_TM"/>
</dbReference>
<dbReference type="PANTHER" id="PTHR22950">
    <property type="entry name" value="AMINO ACID TRANSPORTER"/>
    <property type="match status" value="1"/>
</dbReference>
<dbReference type="PANTHER" id="PTHR22950:SF185">
    <property type="entry name" value="PROTON-COUPLED AMINO ACID TRANSPORTER 2"/>
    <property type="match status" value="1"/>
</dbReference>
<dbReference type="Pfam" id="PF01490">
    <property type="entry name" value="Aa_trans"/>
    <property type="match status" value="1"/>
</dbReference>
<proteinExistence type="evidence at protein level"/>
<accession>Q8BHK3</accession>
<accession>Q8BUB0</accession>
<accession>Q8JZP1</accession>
<protein>
    <recommendedName>
        <fullName evidence="12">Proton-coupled amino acid transporter 2</fullName>
        <shortName evidence="8">Proton/amino acid transporter 2</shortName>
    </recommendedName>
    <alternativeName>
        <fullName evidence="13">Solute carrier family 36 member 2</fullName>
    </alternativeName>
    <alternativeName>
        <fullName evidence="9">Transmembrane domain rich protein 1</fullName>
        <shortName evidence="9">Tramdorin-1</shortName>
    </alternativeName>
</protein>
<name>S36A2_MOUSE</name>
<comment type="function">
    <text evidence="3 4 5 7">Electrogenic proton/amino acid symporter with a high selectivity for the small side chains amino acids glycine, alanine and proline, where both L- and D-enantiomers are transported. Extension of the backbone length, as in beta-alanine and 4-aminobutanoate or methylation of the amino group, as in sarcosine and N,N-dimethylglycine, are also tolerated but decrease transport efficiency. A free carboxyl group is preferred.</text>
</comment>
<comment type="catalytic activity">
    <reaction evidence="3 5 7">
        <text>glycine(in) + H(+)(in) = glycine(out) + H(+)(out)</text>
        <dbReference type="Rhea" id="RHEA:28899"/>
        <dbReference type="ChEBI" id="CHEBI:15378"/>
        <dbReference type="ChEBI" id="CHEBI:57305"/>
    </reaction>
</comment>
<comment type="catalytic activity">
    <reaction evidence="3 7">
        <text>L-alanine(in) + H(+)(in) = L-alanine(out) + H(+)(out)</text>
        <dbReference type="Rhea" id="RHEA:29443"/>
        <dbReference type="ChEBI" id="CHEBI:15378"/>
        <dbReference type="ChEBI" id="CHEBI:57972"/>
    </reaction>
</comment>
<comment type="catalytic activity">
    <reaction evidence="3 7">
        <text>D-alanine(in) + H(+)(in) = D-alanine(out) + H(+)(out)</text>
        <dbReference type="Rhea" id="RHEA:28903"/>
        <dbReference type="ChEBI" id="CHEBI:15378"/>
        <dbReference type="ChEBI" id="CHEBI:57416"/>
    </reaction>
</comment>
<comment type="catalytic activity">
    <reaction evidence="3 4 7">
        <text>L-proline(out) + H(+)(out) = L-proline(in) + H(+)(in)</text>
        <dbReference type="Rhea" id="RHEA:28963"/>
        <dbReference type="ChEBI" id="CHEBI:15378"/>
        <dbReference type="ChEBI" id="CHEBI:60039"/>
    </reaction>
</comment>
<comment type="catalytic activity">
    <reaction evidence="7">
        <text>D-proline(out) + H(+)(out) = D-proline(in) + H(+)(in)</text>
        <dbReference type="Rhea" id="RHEA:70643"/>
        <dbReference type="ChEBI" id="CHEBI:15378"/>
        <dbReference type="ChEBI" id="CHEBI:57726"/>
    </reaction>
</comment>
<comment type="catalytic activity">
    <reaction evidence="7">
        <text>4-hydroxy-L-proline(in) + H(+)(in) = 4-hydroxy-L-proline(out) + H(+)(out)</text>
        <dbReference type="Rhea" id="RHEA:70663"/>
        <dbReference type="ChEBI" id="CHEBI:15378"/>
        <dbReference type="ChEBI" id="CHEBI:58419"/>
    </reaction>
</comment>
<comment type="catalytic activity">
    <reaction evidence="3">
        <text>L-serine(in) + H(+)(in) = L-serine(out) + H(+)(out)</text>
        <dbReference type="Rhea" id="RHEA:28887"/>
        <dbReference type="ChEBI" id="CHEBI:15378"/>
        <dbReference type="ChEBI" id="CHEBI:33384"/>
    </reaction>
</comment>
<comment type="catalytic activity">
    <reaction evidence="3 7">
        <text>D-serine(out) + H(+)(out) = D-serine(in) + H(+)(in)</text>
        <dbReference type="Rhea" id="RHEA:70647"/>
        <dbReference type="ChEBI" id="CHEBI:15378"/>
        <dbReference type="ChEBI" id="CHEBI:35247"/>
    </reaction>
</comment>
<comment type="catalytic activity">
    <reaction evidence="3 7">
        <text>beta-alanine(in) + H(+)(in) = beta-alanine(out) + H(+)(out)</text>
        <dbReference type="Rhea" id="RHEA:29459"/>
        <dbReference type="ChEBI" id="CHEBI:15378"/>
        <dbReference type="ChEBI" id="CHEBI:57966"/>
    </reaction>
</comment>
<comment type="catalytic activity">
    <reaction evidence="3 7">
        <text>4-aminobutanoate(in) + H(+)(in) = 4-aminobutanoate(out) + H(+)(out)</text>
        <dbReference type="Rhea" id="RHEA:28915"/>
        <dbReference type="ChEBI" id="CHEBI:15378"/>
        <dbReference type="ChEBI" id="CHEBI:59888"/>
    </reaction>
</comment>
<comment type="catalytic activity">
    <reaction evidence="7">
        <text>sarcosine(in) + H(+)(in) = sarcosine(out) + H(+)(out)</text>
        <dbReference type="Rhea" id="RHEA:70655"/>
        <dbReference type="ChEBI" id="CHEBI:15378"/>
        <dbReference type="ChEBI" id="CHEBI:57433"/>
    </reaction>
</comment>
<comment type="catalytic activity">
    <reaction evidence="7">
        <text>N,N-dimethylglycine(in) + H(+)(in) = N,N-dimethylglycine(out) + H(+)(out)</text>
        <dbReference type="Rhea" id="RHEA:70659"/>
        <dbReference type="ChEBI" id="CHEBI:15378"/>
        <dbReference type="ChEBI" id="CHEBI:58251"/>
    </reaction>
</comment>
<comment type="biophysicochemical properties">
    <kinetics>
        <KM evidence="3">0.59 mM for glycine</KM>
        <KM evidence="3">0.26 mM for L-alanine</KM>
        <KM evidence="3">0.12 mM for L-proline</KM>
        <KM evidence="3">43 mM for L-serine</KM>
        <KM evidence="3">6.5 mM for D-alanine</KM>
        <KM evidence="3">30.9 mM for 4-aminobutanoate/GABA</KM>
    </kinetics>
</comment>
<comment type="subcellular location">
    <subcellularLocation>
        <location evidence="3 5">Cell membrane</location>
        <topology evidence="1">Multi-pass membrane protein</topology>
    </subcellularLocation>
    <subcellularLocation>
        <location evidence="5">Endoplasmic reticulum membrane</location>
    </subcellularLocation>
    <subcellularLocation>
        <location evidence="5">Recycling endosome membrane</location>
    </subcellularLocation>
</comment>
<comment type="alternative products">
    <event type="alternative splicing"/>
    <isoform>
        <id>Q8BHK3-1</id>
        <name>1</name>
        <sequence type="displayed"/>
    </isoform>
    <isoform>
        <id>Q8BHK3-2</id>
        <name>2</name>
        <sequence type="described" ref="VSP_032374 VSP_032375"/>
    </isoform>
</comment>
<comment type="tissue specificity">
    <text evidence="4 5 6">Expressed in spinal cord, brain, testis, lung, heart, colon, spleen, kidney and muscle. Found in neuronal cell bodies in the anterior horn, in spinal cord brain stem, cerebellum, hippocampus, hypothalamus, rhinencephalon, cerebral cortex, and olfactory bulb in the brain. Also expressed in bone and fat tissues.</text>
</comment>
<comment type="similarity">
    <text evidence="11">Belongs to the amino acid/polyamine transporter 2 family.</text>
</comment>
<keyword id="KW-0025">Alternative splicing</keyword>
<keyword id="KW-1003">Cell membrane</keyword>
<keyword id="KW-0256">Endoplasmic reticulum</keyword>
<keyword id="KW-0967">Endosome</keyword>
<keyword id="KW-0472">Membrane</keyword>
<keyword id="KW-1185">Reference proteome</keyword>
<keyword id="KW-0812">Transmembrane</keyword>
<keyword id="KW-1133">Transmembrane helix</keyword>
<sequence>MSVTKSARSPQVATPLNLDLPESAKKLQSQDPSPANGSSSESSKKTKGITGFQTLVHLVKGNMGTGILGLPLAVKNAGILMGPLSLLVMGLIACHCMHILVRCAQRFCHRLNKPFMDYGDTVMHGLAFSPNAWLQNHAHWGRRVVSFFLIVTQLGFCCVYIVFLADNLKQVVEAVNSTTISCHKNETVVLTPTMDSRLYMLSFLPVLGLLVFVRNLRVLTIFSLLANISMLVSLVIIAQYIIQEIPDASQLPLVASWKTYPLFFGTAIFSFESIGVVLPLENKMKDARGFPTILSLGMSIITTLYIAIGALGYLRFGDDIKASITLNLPNCWLYQSVKLLYVVGILCTYALQFYVPAEIIIPLAVSQVSKRWALPVDLSIRLALVCLTCMLAILIPRLDLVLSLVGSVSSSALALIIPPLLEVVTYYGEGISPLTVTKDALISILGFMGFVVGTYQALDELIKSGNSPALSNSTMFIQ</sequence>
<reference key="1">
    <citation type="journal article" date="2002" name="J. Biol. Chem.">
        <title>Functional characterization of two novel mammalian electrogenic proton-dependent amino acid cotransporters.</title>
        <authorList>
            <person name="Boll M."/>
            <person name="Foltz M."/>
            <person name="Rubio-Aliaga I."/>
            <person name="Kottra G."/>
            <person name="Daniel H."/>
        </authorList>
    </citation>
    <scope>NUCLEOTIDE SEQUENCE [MRNA] (ISOFORM 1)</scope>
    <scope>FUNCTION</scope>
    <scope>TRANSPORTER ACTIVITY</scope>
    <scope>BIOPHYSICOCHEMICAL PROPERTIES</scope>
    <scope>SUBCELLULAR LOCATION</scope>
    <source>
        <strain>C57BL/6J</strain>
    </source>
</reference>
<reference key="2">
    <citation type="journal article" date="2002" name="J. Neurosci.">
        <title>Identification of genes that are downregulated in the absence of the POU domain transcription factor pou3f1 (Oct-6, Tst-1, SCIP) in sciatic nerve.</title>
        <authorList>
            <person name="Bermingham J.R. Jr."/>
            <person name="Shumas S."/>
            <person name="Whisenhunt T."/>
            <person name="Sirkowski E.E."/>
            <person name="O'Connell S."/>
            <person name="Scherer S.S."/>
            <person name="Rosenfeld M.G."/>
        </authorList>
    </citation>
    <scope>NUCLEOTIDE SEQUENCE [MRNA] (ISOFORM 1)</scope>
    <source>
        <strain>C57BL/6J</strain>
    </source>
</reference>
<reference key="3">
    <citation type="journal article" date="2005" name="Science">
        <title>The transcriptional landscape of the mammalian genome.</title>
        <authorList>
            <person name="Carninci P."/>
            <person name="Kasukawa T."/>
            <person name="Katayama S."/>
            <person name="Gough J."/>
            <person name="Frith M.C."/>
            <person name="Maeda N."/>
            <person name="Oyama R."/>
            <person name="Ravasi T."/>
            <person name="Lenhard B."/>
            <person name="Wells C."/>
            <person name="Kodzius R."/>
            <person name="Shimokawa K."/>
            <person name="Bajic V.B."/>
            <person name="Brenner S.E."/>
            <person name="Batalov S."/>
            <person name="Forrest A.R."/>
            <person name="Zavolan M."/>
            <person name="Davis M.J."/>
            <person name="Wilming L.G."/>
            <person name="Aidinis V."/>
            <person name="Allen J.E."/>
            <person name="Ambesi-Impiombato A."/>
            <person name="Apweiler R."/>
            <person name="Aturaliya R.N."/>
            <person name="Bailey T.L."/>
            <person name="Bansal M."/>
            <person name="Baxter L."/>
            <person name="Beisel K.W."/>
            <person name="Bersano T."/>
            <person name="Bono H."/>
            <person name="Chalk A.M."/>
            <person name="Chiu K.P."/>
            <person name="Choudhary V."/>
            <person name="Christoffels A."/>
            <person name="Clutterbuck D.R."/>
            <person name="Crowe M.L."/>
            <person name="Dalla E."/>
            <person name="Dalrymple B.P."/>
            <person name="de Bono B."/>
            <person name="Della Gatta G."/>
            <person name="di Bernardo D."/>
            <person name="Down T."/>
            <person name="Engstrom P."/>
            <person name="Fagiolini M."/>
            <person name="Faulkner G."/>
            <person name="Fletcher C.F."/>
            <person name="Fukushima T."/>
            <person name="Furuno M."/>
            <person name="Futaki S."/>
            <person name="Gariboldi M."/>
            <person name="Georgii-Hemming P."/>
            <person name="Gingeras T.R."/>
            <person name="Gojobori T."/>
            <person name="Green R.E."/>
            <person name="Gustincich S."/>
            <person name="Harbers M."/>
            <person name="Hayashi Y."/>
            <person name="Hensch T.K."/>
            <person name="Hirokawa N."/>
            <person name="Hill D."/>
            <person name="Huminiecki L."/>
            <person name="Iacono M."/>
            <person name="Ikeo K."/>
            <person name="Iwama A."/>
            <person name="Ishikawa T."/>
            <person name="Jakt M."/>
            <person name="Kanapin A."/>
            <person name="Katoh M."/>
            <person name="Kawasawa Y."/>
            <person name="Kelso J."/>
            <person name="Kitamura H."/>
            <person name="Kitano H."/>
            <person name="Kollias G."/>
            <person name="Krishnan S.P."/>
            <person name="Kruger A."/>
            <person name="Kummerfeld S.K."/>
            <person name="Kurochkin I.V."/>
            <person name="Lareau L.F."/>
            <person name="Lazarevic D."/>
            <person name="Lipovich L."/>
            <person name="Liu J."/>
            <person name="Liuni S."/>
            <person name="McWilliam S."/>
            <person name="Madan Babu M."/>
            <person name="Madera M."/>
            <person name="Marchionni L."/>
            <person name="Matsuda H."/>
            <person name="Matsuzawa S."/>
            <person name="Miki H."/>
            <person name="Mignone F."/>
            <person name="Miyake S."/>
            <person name="Morris K."/>
            <person name="Mottagui-Tabar S."/>
            <person name="Mulder N."/>
            <person name="Nakano N."/>
            <person name="Nakauchi H."/>
            <person name="Ng P."/>
            <person name="Nilsson R."/>
            <person name="Nishiguchi S."/>
            <person name="Nishikawa S."/>
            <person name="Nori F."/>
            <person name="Ohara O."/>
            <person name="Okazaki Y."/>
            <person name="Orlando V."/>
            <person name="Pang K.C."/>
            <person name="Pavan W.J."/>
            <person name="Pavesi G."/>
            <person name="Pesole G."/>
            <person name="Petrovsky N."/>
            <person name="Piazza S."/>
            <person name="Reed J."/>
            <person name="Reid J.F."/>
            <person name="Ring B.Z."/>
            <person name="Ringwald M."/>
            <person name="Rost B."/>
            <person name="Ruan Y."/>
            <person name="Salzberg S.L."/>
            <person name="Sandelin A."/>
            <person name="Schneider C."/>
            <person name="Schoenbach C."/>
            <person name="Sekiguchi K."/>
            <person name="Semple C.A."/>
            <person name="Seno S."/>
            <person name="Sessa L."/>
            <person name="Sheng Y."/>
            <person name="Shibata Y."/>
            <person name="Shimada H."/>
            <person name="Shimada K."/>
            <person name="Silva D."/>
            <person name="Sinclair B."/>
            <person name="Sperling S."/>
            <person name="Stupka E."/>
            <person name="Sugiura K."/>
            <person name="Sultana R."/>
            <person name="Takenaka Y."/>
            <person name="Taki K."/>
            <person name="Tammoja K."/>
            <person name="Tan S.L."/>
            <person name="Tang S."/>
            <person name="Taylor M.S."/>
            <person name="Tegner J."/>
            <person name="Teichmann S.A."/>
            <person name="Ueda H.R."/>
            <person name="van Nimwegen E."/>
            <person name="Verardo R."/>
            <person name="Wei C.L."/>
            <person name="Yagi K."/>
            <person name="Yamanishi H."/>
            <person name="Zabarovsky E."/>
            <person name="Zhu S."/>
            <person name="Zimmer A."/>
            <person name="Hide W."/>
            <person name="Bult C."/>
            <person name="Grimmond S.M."/>
            <person name="Teasdale R.D."/>
            <person name="Liu E.T."/>
            <person name="Brusic V."/>
            <person name="Quackenbush J."/>
            <person name="Wahlestedt C."/>
            <person name="Mattick J.S."/>
            <person name="Hume D.A."/>
            <person name="Kai C."/>
            <person name="Sasaki D."/>
            <person name="Tomaru Y."/>
            <person name="Fukuda S."/>
            <person name="Kanamori-Katayama M."/>
            <person name="Suzuki M."/>
            <person name="Aoki J."/>
            <person name="Arakawa T."/>
            <person name="Iida J."/>
            <person name="Imamura K."/>
            <person name="Itoh M."/>
            <person name="Kato T."/>
            <person name="Kawaji H."/>
            <person name="Kawagashira N."/>
            <person name="Kawashima T."/>
            <person name="Kojima M."/>
            <person name="Kondo S."/>
            <person name="Konno H."/>
            <person name="Nakano K."/>
            <person name="Ninomiya N."/>
            <person name="Nishio T."/>
            <person name="Okada M."/>
            <person name="Plessy C."/>
            <person name="Shibata K."/>
            <person name="Shiraki T."/>
            <person name="Suzuki S."/>
            <person name="Tagami M."/>
            <person name="Waki K."/>
            <person name="Watahiki A."/>
            <person name="Okamura-Oho Y."/>
            <person name="Suzuki H."/>
            <person name="Kawai J."/>
            <person name="Hayashizaki Y."/>
        </authorList>
    </citation>
    <scope>NUCLEOTIDE SEQUENCE [LARGE SCALE MRNA] (ISOFORMS 1 AND 2)</scope>
    <source>
        <strain>C57BL/6J</strain>
        <strain>NOD</strain>
        <tissue>Head</tissue>
    </source>
</reference>
<reference key="4">
    <citation type="journal article" date="2009" name="PLoS Biol.">
        <title>Lineage-specific biology revealed by a finished genome assembly of the mouse.</title>
        <authorList>
            <person name="Church D.M."/>
            <person name="Goodstadt L."/>
            <person name="Hillier L.W."/>
            <person name="Zody M.C."/>
            <person name="Goldstein S."/>
            <person name="She X."/>
            <person name="Bult C.J."/>
            <person name="Agarwala R."/>
            <person name="Cherry J.L."/>
            <person name="DiCuccio M."/>
            <person name="Hlavina W."/>
            <person name="Kapustin Y."/>
            <person name="Meric P."/>
            <person name="Maglott D."/>
            <person name="Birtle Z."/>
            <person name="Marques A.C."/>
            <person name="Graves T."/>
            <person name="Zhou S."/>
            <person name="Teague B."/>
            <person name="Potamousis K."/>
            <person name="Churas C."/>
            <person name="Place M."/>
            <person name="Herschleb J."/>
            <person name="Runnheim R."/>
            <person name="Forrest D."/>
            <person name="Amos-Landgraf J."/>
            <person name="Schwartz D.C."/>
            <person name="Cheng Z."/>
            <person name="Lindblad-Toh K."/>
            <person name="Eichler E.E."/>
            <person name="Ponting C.P."/>
        </authorList>
    </citation>
    <scope>NUCLEOTIDE SEQUENCE [LARGE SCALE GENOMIC DNA]</scope>
    <source>
        <strain>C57BL/6J</strain>
    </source>
</reference>
<reference key="5">
    <citation type="journal article" date="2004" name="Genome Res.">
        <title>The status, quality, and expansion of the NIH full-length cDNA project: the Mammalian Gene Collection (MGC).</title>
        <authorList>
            <consortium name="The MGC Project Team"/>
        </authorList>
    </citation>
    <scope>NUCLEOTIDE SEQUENCE [LARGE SCALE MRNA] (ISOFORM 1)</scope>
    <source>
        <strain>FVB/N</strain>
        <tissue>Salivary gland</tissue>
    </source>
</reference>
<reference key="6">
    <citation type="journal article" date="2003" name="Genomics">
        <title>A cluster of proton/amino acid transporter genes in the human and mouse genomes.</title>
        <authorList>
            <person name="Boll M."/>
            <person name="Foltz M."/>
            <person name="Rubio-Aliaga I."/>
            <person name="Daniel H."/>
        </authorList>
    </citation>
    <scope>FUNCTION</scope>
    <scope>TRANSPORTER ACTIVITY</scope>
    <scope>TISSUE SPECIFICITY</scope>
</reference>
<reference key="7">
    <citation type="journal article" date="2004" name="Eur. J. Biochem.">
        <title>Substrate specificity and transport mode of the proton-dependent amino acid transporter mPAT2.</title>
        <authorList>
            <person name="Foltz M."/>
            <person name="Oechsler C."/>
            <person name="Boll M."/>
            <person name="Kottra G."/>
            <person name="Daniel H."/>
        </authorList>
    </citation>
    <scope>FUNCTION</scope>
    <scope>TRANSPORTER ACTIVITY</scope>
</reference>
<reference key="8">
    <citation type="journal article" date="2004" name="J. Biol. Chem.">
        <title>The proton/amino acid cotransporter PAT2 is expressed in neurons with a different subcellular localization than its paralog PAT1.</title>
        <authorList>
            <person name="Rubio-Aliaga I."/>
            <person name="Boll M."/>
            <person name="Vogt Weisenhorn D.M."/>
            <person name="Foltz M."/>
            <person name="Kottra G."/>
            <person name="Daniel H."/>
        </authorList>
    </citation>
    <scope>FUNCTION</scope>
    <scope>TRANSPORTER ACTIVITY</scope>
    <scope>SUBCELLULAR LOCATION</scope>
    <scope>TISSUE SPECIFICITY</scope>
</reference>
<reference key="9">
    <citation type="journal article" date="2004" name="Mamm. Genome">
        <title>Organization and expression of the SLC36 cluster of amino acid transporter genes.</title>
        <authorList>
            <person name="Bermingham J.R. Jr."/>
            <person name="Pennington J."/>
        </authorList>
    </citation>
    <scope>TISSUE SPECIFICITY</scope>
</reference>
<reference key="10">
    <citation type="journal article" date="2010" name="Cell">
        <title>A tissue-specific atlas of mouse protein phosphorylation and expression.</title>
        <authorList>
            <person name="Huttlin E.L."/>
            <person name="Jedrychowski M.P."/>
            <person name="Elias J.E."/>
            <person name="Goswami T."/>
            <person name="Rad R."/>
            <person name="Beausoleil S.A."/>
            <person name="Villen J."/>
            <person name="Haas W."/>
            <person name="Sowa M.E."/>
            <person name="Gygi S.P."/>
        </authorList>
    </citation>
    <scope>IDENTIFICATION BY MASS SPECTROMETRY [LARGE SCALE ANALYSIS]</scope>
    <source>
        <tissue>Brown adipose tissue</tissue>
        <tissue>Lung</tissue>
    </source>
</reference>
<feature type="chain" id="PRO_0000324820" description="Proton-coupled amino acid transporter 2">
    <location>
        <begin position="1"/>
        <end position="478"/>
    </location>
</feature>
<feature type="topological domain" description="Cytoplasmic" evidence="1">
    <location>
        <begin position="1"/>
        <end position="53"/>
    </location>
</feature>
<feature type="transmembrane region" description="Helical" evidence="1">
    <location>
        <begin position="54"/>
        <end position="74"/>
    </location>
</feature>
<feature type="topological domain" description="Extracellular" evidence="1">
    <location>
        <begin position="75"/>
        <end position="76"/>
    </location>
</feature>
<feature type="transmembrane region" description="Helical" evidence="1">
    <location>
        <begin position="77"/>
        <end position="97"/>
    </location>
</feature>
<feature type="topological domain" description="Cytoplasmic" evidence="1">
    <location>
        <begin position="98"/>
        <end position="143"/>
    </location>
</feature>
<feature type="transmembrane region" description="Helical" evidence="1">
    <location>
        <begin position="144"/>
        <end position="164"/>
    </location>
</feature>
<feature type="topological domain" description="Extracellular" evidence="1">
    <location>
        <begin position="165"/>
        <end position="192"/>
    </location>
</feature>
<feature type="transmembrane region" description="Helical" evidence="1">
    <location>
        <begin position="193"/>
        <end position="213"/>
    </location>
</feature>
<feature type="topological domain" description="Cytoplasmic" evidence="1">
    <location>
        <begin position="214"/>
        <end position="217"/>
    </location>
</feature>
<feature type="transmembrane region" description="Helical" evidence="1">
    <location>
        <begin position="218"/>
        <end position="238"/>
    </location>
</feature>
<feature type="topological domain" description="Extracellular" evidence="1">
    <location>
        <begin position="239"/>
        <end position="259"/>
    </location>
</feature>
<feature type="transmembrane region" description="Helical" evidence="1">
    <location>
        <begin position="260"/>
        <end position="280"/>
    </location>
</feature>
<feature type="topological domain" description="Cytoplasmic" evidence="1">
    <location>
        <begin position="281"/>
        <end position="292"/>
    </location>
</feature>
<feature type="transmembrane region" description="Helical" evidence="1">
    <location>
        <begin position="293"/>
        <end position="313"/>
    </location>
</feature>
<feature type="topological domain" description="Extracellular" evidence="1">
    <location>
        <begin position="314"/>
        <end position="340"/>
    </location>
</feature>
<feature type="transmembrane region" description="Helical" evidence="1">
    <location>
        <begin position="341"/>
        <end position="361"/>
    </location>
</feature>
<feature type="topological domain" description="Cytoplasmic" evidence="1">
    <location>
        <begin position="362"/>
        <end position="374"/>
    </location>
</feature>
<feature type="transmembrane region" description="Helical" evidence="1">
    <location>
        <begin position="375"/>
        <end position="395"/>
    </location>
</feature>
<feature type="topological domain" description="Extracellular" evidence="1">
    <location>
        <begin position="396"/>
        <end position="399"/>
    </location>
</feature>
<feature type="transmembrane region" description="Helical" evidence="1">
    <location>
        <begin position="400"/>
        <end position="420"/>
    </location>
</feature>
<feature type="topological domain" description="Cytoplasmic" evidence="1">
    <location>
        <begin position="421"/>
        <end position="441"/>
    </location>
</feature>
<feature type="transmembrane region" description="Helical" evidence="1">
    <location>
        <begin position="442"/>
        <end position="462"/>
    </location>
</feature>
<feature type="topological domain" description="Extracellular" evidence="1">
    <location>
        <begin position="463"/>
        <end position="478"/>
    </location>
</feature>
<feature type="region of interest" description="Disordered" evidence="2">
    <location>
        <begin position="1"/>
        <end position="46"/>
    </location>
</feature>
<feature type="compositionally biased region" description="Polar residues" evidence="2">
    <location>
        <begin position="1"/>
        <end position="14"/>
    </location>
</feature>
<feature type="compositionally biased region" description="Polar residues" evidence="2">
    <location>
        <begin position="26"/>
        <end position="37"/>
    </location>
</feature>
<feature type="splice variant" id="VSP_032374" description="In isoform 2." evidence="10">
    <original>LPL</original>
    <variation>RFE</variation>
    <location>
        <begin position="278"/>
        <end position="280"/>
    </location>
</feature>
<feature type="splice variant" id="VSP_032375" description="In isoform 2." evidence="10">
    <location>
        <begin position="281"/>
        <end position="478"/>
    </location>
</feature>
<feature type="sequence conflict" description="In Ref. 1; AAM80481 and 2; AAM44854." evidence="11" ref="1 2">
    <original>S</original>
    <variation>T</variation>
    <location>
        <position position="38"/>
    </location>
</feature>
<feature type="sequence conflict" description="In Ref. 1; AAM80481 and 2; AAM44854." evidence="11" ref="1 2">
    <original>V</original>
    <variation>A</variation>
    <location>
        <position position="189"/>
    </location>
</feature>
<gene>
    <name evidence="13" type="primary">Slc36a2</name>
    <name evidence="8" type="synonym">Pat2</name>
    <name evidence="9" type="synonym">Tramd1</name>
</gene>
<organism>
    <name type="scientific">Mus musculus</name>
    <name type="common">Mouse</name>
    <dbReference type="NCBI Taxonomy" id="10090"/>
    <lineage>
        <taxon>Eukaryota</taxon>
        <taxon>Metazoa</taxon>
        <taxon>Chordata</taxon>
        <taxon>Craniata</taxon>
        <taxon>Vertebrata</taxon>
        <taxon>Euteleostomi</taxon>
        <taxon>Mammalia</taxon>
        <taxon>Eutheria</taxon>
        <taxon>Euarchontoglires</taxon>
        <taxon>Glires</taxon>
        <taxon>Rodentia</taxon>
        <taxon>Myomorpha</taxon>
        <taxon>Muroidea</taxon>
        <taxon>Muridae</taxon>
        <taxon>Murinae</taxon>
        <taxon>Mus</taxon>
        <taxon>Mus</taxon>
    </lineage>
</organism>